<comment type="function">
    <text evidence="4 5">Shared cell surface receptor required for the activation of five class 2 cytokines: IL10, IL22, IL26, IL28, and IFNL1. The IFNLR1/IL10RB dimer is a receptor for the cytokine ligands IFNL2 and IFNL3 and mediates their antiviral activity. The ligand/receptor complex stimulate the activation of the JAK/STAT signaling pathway leading to the expression of IFN-stimulated genes (ISG), which contribute to the antiviral state.</text>
</comment>
<comment type="subunit">
    <text evidence="4">Heterodimer with IFNLR1.</text>
</comment>
<comment type="interaction">
    <interactant intactId="EBI-11175900">
        <id>Q08334</id>
    </interactant>
    <interactant intactId="EBI-1031632">
        <id>P22301</id>
        <label>IL10</label>
    </interactant>
    <organismsDiffer>false</organismsDiffer>
    <experiments>2</experiments>
</comment>
<comment type="interaction">
    <interactant intactId="EBI-11175900">
        <id>Q08334</id>
    </interactant>
    <interactant intactId="EBI-8040250">
        <id>Q9GZX6</id>
        <label>IL22</label>
    </interactant>
    <organismsDiffer>false</organismsDiffer>
    <experiments>2</experiments>
</comment>
<comment type="interaction">
    <interactant intactId="EBI-11175900">
        <id>Q08334</id>
    </interactant>
    <interactant intactId="EBI-3940749">
        <id>Q8N6P7</id>
        <label>IL22RA1</label>
    </interactant>
    <organismsDiffer>false</organismsDiffer>
    <experiments>5</experiments>
</comment>
<comment type="subcellular location">
    <subcellularLocation>
        <location>Membrane</location>
        <topology>Single-pass type I membrane protein</topology>
    </subcellularLocation>
</comment>
<comment type="polymorphism">
    <text>Genetic variations in IL10RB influence susceptibility to hepatitis B virus (HBV) infection [MIM:610424].</text>
</comment>
<comment type="disease" evidence="8">
    <disease id="DI-02673">
        <name>Inflammatory bowel disease 25, autosomal recessive</name>
        <acronym>IBD25</acronym>
        <description>A chronic, relapsing inflammation of the gastrointestinal tract with a complex etiology. It is subdivided into Crohn disease and ulcerative colitis phenotypes. Crohn disease may affect any part of the gastrointestinal tract from the mouth to the anus, but most frequently it involves the terminal ileum and colon. Bowel inflammation is transmural and discontinuous; it may contain granulomas or be associated with intestinal or perianal fistulas. In contrast, in ulcerative colitis, the inflammation is continuous and limited to rectal and colonic mucosal layers; fistulas and granulomas are not observed. Both diseases include extraintestinal inflammation of the skin, eyes, or joints.</description>
        <dbReference type="MIM" id="612567"/>
    </disease>
    <text>The disease is caused by variants affecting the gene represented in this entry.</text>
</comment>
<comment type="similarity">
    <text evidence="11">Belongs to the type II cytokine receptor family.</text>
</comment>
<keyword id="KW-0002">3D-structure</keyword>
<keyword id="KW-0051">Antiviral defense</keyword>
<keyword id="KW-0903">Direct protein sequencing</keyword>
<keyword id="KW-1015">Disulfide bond</keyword>
<keyword id="KW-0325">Glycoprotein</keyword>
<keyword id="KW-0472">Membrane</keyword>
<keyword id="KW-1267">Proteomics identification</keyword>
<keyword id="KW-0675">Receptor</keyword>
<keyword id="KW-1185">Reference proteome</keyword>
<keyword id="KW-0677">Repeat</keyword>
<keyword id="KW-0732">Signal</keyword>
<keyword id="KW-0812">Transmembrane</keyword>
<keyword id="KW-1133">Transmembrane helix</keyword>
<protein>
    <recommendedName>
        <fullName>Interleukin-10 receptor subunit beta</fullName>
        <shortName>IL-10 receptor subunit beta</shortName>
        <shortName>IL-10R subunit beta</shortName>
        <shortName>IL-10RB</shortName>
    </recommendedName>
    <alternativeName>
        <fullName>Cytokine receptor class-II member 4</fullName>
    </alternativeName>
    <alternativeName>
        <fullName>Cytokine receptor family 2 member 4</fullName>
        <shortName>CRF2-4</shortName>
    </alternativeName>
    <alternativeName>
        <fullName>Interleukin-10 receptor subunit 2</fullName>
        <shortName>IL-10R subunit 2</shortName>
        <shortName>IL-10R2</shortName>
    </alternativeName>
    <cdAntigenName>CDw210b</cdAntigenName>
</protein>
<organism>
    <name type="scientific">Homo sapiens</name>
    <name type="common">Human</name>
    <dbReference type="NCBI Taxonomy" id="9606"/>
    <lineage>
        <taxon>Eukaryota</taxon>
        <taxon>Metazoa</taxon>
        <taxon>Chordata</taxon>
        <taxon>Craniata</taxon>
        <taxon>Vertebrata</taxon>
        <taxon>Euteleostomi</taxon>
        <taxon>Mammalia</taxon>
        <taxon>Eutheria</taxon>
        <taxon>Euarchontoglires</taxon>
        <taxon>Primates</taxon>
        <taxon>Haplorrhini</taxon>
        <taxon>Catarrhini</taxon>
        <taxon>Hominidae</taxon>
        <taxon>Homo</taxon>
    </lineage>
</organism>
<accession>Q08334</accession>
<accession>Q9BUU4</accession>
<gene>
    <name type="primary">IL10RB</name>
    <name type="synonym">CRFB4</name>
    <name type="synonym">D21S58</name>
    <name type="synonym">D21S66</name>
</gene>
<name>I10R2_HUMAN</name>
<feature type="signal peptide" evidence="6">
    <location>
        <begin position="1"/>
        <end position="19"/>
    </location>
</feature>
<feature type="chain" id="PRO_0000011014" description="Interleukin-10 receptor subunit beta">
    <location>
        <begin position="20"/>
        <end position="325"/>
    </location>
</feature>
<feature type="topological domain" description="Extracellular" evidence="1">
    <location>
        <begin position="20"/>
        <end position="220"/>
    </location>
</feature>
<feature type="transmembrane region" description="Helical" evidence="1">
    <location>
        <begin position="221"/>
        <end position="242"/>
    </location>
</feature>
<feature type="topological domain" description="Cytoplasmic" evidence="1">
    <location>
        <begin position="243"/>
        <end position="325"/>
    </location>
</feature>
<feature type="domain" description="Fibronectin type-III 1" evidence="2">
    <location>
        <begin position="23"/>
        <end position="111"/>
    </location>
</feature>
<feature type="domain" description="Fibronectin type-III 2" evidence="2">
    <location>
        <begin position="114"/>
        <end position="216"/>
    </location>
</feature>
<feature type="region of interest" description="Disordered" evidence="3">
    <location>
        <begin position="301"/>
        <end position="325"/>
    </location>
</feature>
<feature type="compositionally biased region" description="Polar residues" evidence="3">
    <location>
        <begin position="305"/>
        <end position="315"/>
    </location>
</feature>
<feature type="glycosylation site" description="N-linked (GlcNAc...) asparagine" evidence="1">
    <location>
        <position position="49"/>
    </location>
</feature>
<feature type="glycosylation site" description="N-linked (GlcNAc...) asparagine" evidence="1">
    <location>
        <position position="68"/>
    </location>
</feature>
<feature type="glycosylation site" description="N-linked (GlcNAc...) asparagine" evidence="1">
    <location>
        <position position="102"/>
    </location>
</feature>
<feature type="glycosylation site" description="N-linked (GlcNAc...) asparagine" evidence="1">
    <location>
        <position position="161"/>
    </location>
</feature>
<feature type="disulfide bond" evidence="9">
    <location>
        <begin position="66"/>
        <end position="74"/>
    </location>
</feature>
<feature type="disulfide bond" evidence="9">
    <location>
        <begin position="188"/>
        <end position="209"/>
    </location>
</feature>
<feature type="sequence variant" id="VAR_020666" description="Risk factor for HBV infection; higher cell surface levels; dbSNP:rs2834167." evidence="7 10">
    <original>K</original>
    <variation>E</variation>
    <location>
        <position position="47"/>
    </location>
</feature>
<feature type="sequence conflict" description="In Ref. 2; AAA86872." evidence="11" ref="2">
    <original>A</original>
    <variation>D</variation>
    <location>
        <position position="124"/>
    </location>
</feature>
<feature type="sequence conflict" description="In Ref. 1; CAA78933 and 2; AAA86872." evidence="11" ref="1 2">
    <original>A</original>
    <variation>S</variation>
    <location>
        <position position="243"/>
    </location>
</feature>
<feature type="sequence conflict" description="In Ref. 2; AAA86872." evidence="11" ref="2">
    <original>FLGHP</original>
    <variation>VGRME</variation>
    <location>
        <begin position="269"/>
        <end position="273"/>
    </location>
</feature>
<feature type="sequence conflict" description="In Ref. 2; AAA86872." evidence="11" ref="2">
    <location>
        <begin position="274"/>
        <end position="325"/>
    </location>
</feature>
<feature type="strand" evidence="12">
    <location>
        <begin position="25"/>
        <end position="32"/>
    </location>
</feature>
<feature type="strand" evidence="12">
    <location>
        <begin position="35"/>
        <end position="41"/>
    </location>
</feature>
<feature type="strand" evidence="12">
    <location>
        <begin position="46"/>
        <end position="48"/>
    </location>
</feature>
<feature type="strand" evidence="12">
    <location>
        <begin position="51"/>
        <end position="58"/>
    </location>
</feature>
<feature type="strand" evidence="12">
    <location>
        <begin position="61"/>
        <end position="75"/>
    </location>
</feature>
<feature type="strand" evidence="12">
    <location>
        <begin position="81"/>
        <end position="83"/>
    </location>
</feature>
<feature type="strand" evidence="12">
    <location>
        <begin position="85"/>
        <end position="93"/>
    </location>
</feature>
<feature type="strand" evidence="12">
    <location>
        <begin position="101"/>
        <end position="105"/>
    </location>
</feature>
<feature type="helix" evidence="12">
    <location>
        <begin position="107"/>
        <end position="110"/>
    </location>
</feature>
<feature type="strand" evidence="12">
    <location>
        <begin position="117"/>
        <end position="123"/>
    </location>
</feature>
<feature type="strand" evidence="12">
    <location>
        <begin position="126"/>
        <end position="132"/>
    </location>
</feature>
<feature type="strand" evidence="12">
    <location>
        <begin position="135"/>
        <end position="137"/>
    </location>
</feature>
<feature type="strand" evidence="14">
    <location>
        <begin position="139"/>
        <end position="141"/>
    </location>
</feature>
<feature type="strand" evidence="12">
    <location>
        <begin position="142"/>
        <end position="144"/>
    </location>
</feature>
<feature type="helix" evidence="12">
    <location>
        <begin position="145"/>
        <end position="148"/>
    </location>
</feature>
<feature type="strand" evidence="12">
    <location>
        <begin position="153"/>
        <end position="160"/>
    </location>
</feature>
<feature type="turn" evidence="13">
    <location>
        <begin position="161"/>
        <end position="163"/>
    </location>
</feature>
<feature type="strand" evidence="12">
    <location>
        <begin position="167"/>
        <end position="169"/>
    </location>
</feature>
<feature type="strand" evidence="12">
    <location>
        <begin position="172"/>
        <end position="178"/>
    </location>
</feature>
<feature type="strand" evidence="12">
    <location>
        <begin position="186"/>
        <end position="194"/>
    </location>
</feature>
<feature type="turn" evidence="12">
    <location>
        <begin position="196"/>
        <end position="198"/>
    </location>
</feature>
<feature type="strand" evidence="12">
    <location>
        <begin position="208"/>
        <end position="211"/>
    </location>
</feature>
<feature type="helix" evidence="12">
    <location>
        <begin position="215"/>
        <end position="217"/>
    </location>
</feature>
<proteinExistence type="evidence at protein level"/>
<sequence>MAWSLGSWLGGCLLVSALGMVPPPENVRMNSVNFKNILQWESPAFAKGNLTFTAQYLSYRIFQDKCMNTTLTECDFSSLSKYGDHTLRVRAEFADEHSDWVNITFCPVDDTIIGPPGMQVEVLADSLHMRFLAPKIENEYETWTMKNVYNSWTYNVQYWKNGTDEKFQITPQYDFEVLRNLEPWTTYCVQVRGFLPDRNKAGEWSEPVCEQTTHDETVPSWMVAVILMASVFMVCLALLGCFALLWCVYKKTKYAFSPRNSLPQHLKEFLGHPHHNTLLFFSFPLSDENDVFDKLSVIAEDSESGKQNPGDSCSLGTPPGQGPQS</sequence>
<reference key="1">
    <citation type="journal article" date="1993" name="Genomics">
        <title>A new member of the cytokine receptor gene family maps on chromosome 21 at less than 35 kb from IFNAR.</title>
        <authorList>
            <person name="Lutfalla G."/>
            <person name="Gardiner K."/>
            <person name="Uze G."/>
        </authorList>
    </citation>
    <scope>NUCLEOTIDE SEQUENCE [MRNA]</scope>
    <source>
        <tissue>Fetal brain</tissue>
    </source>
</reference>
<reference key="2">
    <citation type="journal article" date="1995" name="J. Mol. Evol.">
        <title>Structure of the human CRFB4 gene: comparison with its IFNAR neighbor.</title>
        <authorList>
            <person name="Lutfalla G."/>
            <person name="McInnis M.G."/>
            <person name="Antonarakis S.E."/>
            <person name="Uze G."/>
        </authorList>
    </citation>
    <scope>NUCLEOTIDE SEQUENCE [GENOMIC DNA]</scope>
</reference>
<reference key="3">
    <citation type="submission" date="2003-08" db="EMBL/GenBank/DDBJ databases">
        <title>Cloning of human full-length CDSs in BD Creator(TM) system donor vector.</title>
        <authorList>
            <person name="Kalnine N."/>
            <person name="Chen X."/>
            <person name="Rolfs A."/>
            <person name="Halleck A."/>
            <person name="Hines L."/>
            <person name="Eisenstein S."/>
            <person name="Koundinya M."/>
            <person name="Raphael J."/>
            <person name="Moreira D."/>
            <person name="Kelley T."/>
            <person name="LaBaer J."/>
            <person name="Lin Y."/>
            <person name="Phelan M."/>
            <person name="Farmer A."/>
        </authorList>
    </citation>
    <scope>NUCLEOTIDE SEQUENCE [LARGE SCALE MRNA]</scope>
</reference>
<reference key="4">
    <citation type="submission" date="2003-06" db="EMBL/GenBank/DDBJ databases">
        <authorList>
            <consortium name="SeattleSNPs variation discovery resource"/>
        </authorList>
    </citation>
    <scope>NUCLEOTIDE SEQUENCE [GENOMIC DNA]</scope>
    <scope>VARIANT GLU-47</scope>
</reference>
<reference key="5">
    <citation type="journal article" date="2004" name="Genome Res.">
        <title>The status, quality, and expansion of the NIH full-length cDNA project: the Mammalian Gene Collection (MGC).</title>
        <authorList>
            <consortium name="The MGC Project Team"/>
        </authorList>
    </citation>
    <scope>NUCLEOTIDE SEQUENCE [LARGE SCALE MRNA]</scope>
    <source>
        <tissue>Kidney</tissue>
    </source>
</reference>
<reference key="6">
    <citation type="journal article" date="2004" name="Protein Sci.">
        <title>Signal peptide prediction based on analysis of experimentally verified cleavage sites.</title>
        <authorList>
            <person name="Zhang Z."/>
            <person name="Henzel W.J."/>
        </authorList>
    </citation>
    <scope>PROTEIN SEQUENCE OF 20-34</scope>
</reference>
<reference key="7">
    <citation type="journal article" date="1997" name="EMBO J.">
        <title>Identification and functional characterization of a second chain of the interleukin-10 receptor complex.</title>
        <authorList>
            <person name="Kotenko S.V."/>
            <person name="Krause C.D."/>
            <person name="Izotova L.S."/>
            <person name="Pollack B.P."/>
            <person name="Wu W."/>
            <person name="Pestka S."/>
        </authorList>
    </citation>
    <scope>CHARACTERIZATION</scope>
</reference>
<reference key="8">
    <citation type="journal article" date="2000" name="J. Biol. Chem.">
        <title>Interleukin (IL)-22, a novel human cytokine that signals through the interferon receptor-related proteins CRF2-4 and IL-22R.</title>
        <authorList>
            <person name="Xie M.-H."/>
            <person name="Aggarwal S."/>
            <person name="Ho W.-H."/>
            <person name="Foster J."/>
            <person name="Zhang Z."/>
            <person name="Stinson J."/>
            <person name="Wood W.I."/>
            <person name="Goddard A.D."/>
            <person name="Gurney A.L."/>
        </authorList>
    </citation>
    <scope>CHARACTERIZATION</scope>
</reference>
<reference key="9">
    <citation type="journal article" date="2003" name="Nat. Immunol.">
        <title>IL-28, IL-29 and their class II cytokine receptor IL-28R.</title>
        <authorList>
            <person name="Sheppard P."/>
            <person name="Kindsvogel W."/>
            <person name="Xu W."/>
            <person name="Henderson K."/>
            <person name="Schlutsmeyer S."/>
            <person name="Whitmore T.E."/>
            <person name="Kuestner R."/>
            <person name="Garrigues U."/>
            <person name="Birks C."/>
            <person name="Roraback J."/>
            <person name="Ostrander C."/>
            <person name="Dong D."/>
            <person name="Shin J."/>
            <person name="Presnell S."/>
            <person name="Fox B."/>
            <person name="Haldeman B."/>
            <person name="Cooper E."/>
            <person name="Taft D."/>
            <person name="Gilbert T."/>
            <person name="Grant F.J."/>
            <person name="Tackett M."/>
            <person name="Krivan W."/>
            <person name="McKnight G."/>
            <person name="Clegg C."/>
            <person name="Foster D."/>
            <person name="Klucher K.M."/>
        </authorList>
    </citation>
    <scope>FUNCTION</scope>
    <scope>SUBUNIT</scope>
</reference>
<reference key="10">
    <citation type="journal article" date="2004" name="J. Leukoc. Biol.">
        <title>The expanded family of class II cytokines that share the IL-10 receptor-2 (IL-10R2) chain.</title>
        <authorList>
            <person name="Donnelly R.P."/>
            <person name="Sheikh F."/>
            <person name="Kotenko S.V."/>
            <person name="Dickensheets H."/>
        </authorList>
    </citation>
    <scope>FUNCTION</scope>
</reference>
<reference key="11">
    <citation type="journal article" date="2006" name="Proc. Natl. Acad. Sci. U.S.A.">
        <title>Class II cytokine receptor gene cluster is a major locus for hepatitis B persistence.</title>
        <authorList>
            <person name="Frodsham A.J."/>
            <person name="Zhang L."/>
            <person name="Dumpis U."/>
            <person name="Taib N.A.M."/>
            <person name="Best S."/>
            <person name="Durham A."/>
            <person name="Hennig B.J.W."/>
            <person name="Hellier S."/>
            <person name="Knapp S."/>
            <person name="Wright M."/>
            <person name="Chiaramonte M."/>
            <person name="Bell J.I."/>
            <person name="Graves M."/>
            <person name="Whittle H.C."/>
            <person name="Thomas H.C."/>
            <person name="Thursz M.R."/>
            <person name="Hill A.V.S."/>
        </authorList>
    </citation>
    <scope>INVOLVEMENT IN SUSCEPTIBILITY TO HBV INFECTION</scope>
    <scope>VARIANT GLU-47</scope>
    <scope>CHARACTERIZATION OF VARIANT GLU-47</scope>
</reference>
<reference key="12">
    <citation type="journal article" date="2009" name="Anal. Chem.">
        <title>Lys-N and trypsin cover complementary parts of the phosphoproteome in a refined SCX-based approach.</title>
        <authorList>
            <person name="Gauci S."/>
            <person name="Helbig A.O."/>
            <person name="Slijper M."/>
            <person name="Krijgsveld J."/>
            <person name="Heck A.J."/>
            <person name="Mohammed S."/>
        </authorList>
    </citation>
    <scope>IDENTIFICATION BY MASS SPECTROMETRY [LARGE SCALE ANALYSIS]</scope>
</reference>
<reference key="13">
    <citation type="journal article" date="2009" name="N. Engl. J. Med.">
        <title>Inflammatory bowel disease and mutations affecting the interleukin-10 receptor.</title>
        <authorList>
            <person name="Glocker E.O."/>
            <person name="Kotlarz D."/>
            <person name="Boztug K."/>
            <person name="Gertz E.M."/>
            <person name="Schaffer A.A."/>
            <person name="Noyan F."/>
            <person name="Perro M."/>
            <person name="Diestelhorst J."/>
            <person name="Allroth A."/>
            <person name="Murugan D."/>
            <person name="Hatscher N."/>
            <person name="Pfeifer D."/>
            <person name="Sykora K.W."/>
            <person name="Sauer M."/>
            <person name="Kreipe H."/>
            <person name="Lacher M."/>
            <person name="Nustede R."/>
            <person name="Woellner C."/>
            <person name="Baumann U."/>
            <person name="Salzer U."/>
            <person name="Koletzko S."/>
            <person name="Shah N."/>
            <person name="Segal A.W."/>
            <person name="Sauerbrey A."/>
            <person name="Buderus S."/>
            <person name="Snapper S.B."/>
            <person name="Grimbacher B."/>
            <person name="Klein C."/>
        </authorList>
    </citation>
    <scope>INVOLVEMENT IN IBD25</scope>
</reference>
<reference key="14">
    <citation type="journal article" date="2010" name="Structure">
        <title>Structure and mechanism of receptor sharing by the IL-10R2 common chain.</title>
        <authorList>
            <person name="Yoon S.I."/>
            <person name="Jones B.C."/>
            <person name="Logsdon N.J."/>
            <person name="Harris B.D."/>
            <person name="Deshpande A."/>
            <person name="Radaeva S."/>
            <person name="Halloran B.A."/>
            <person name="Gao B."/>
            <person name="Walter M.R."/>
        </authorList>
    </citation>
    <scope>X-RAY CRYSTALLOGRAPHY (2.14 ANGSTROMS) OF 20-220</scope>
    <scope>DISULFIDE BONDS</scope>
</reference>
<evidence type="ECO:0000255" key="1"/>
<evidence type="ECO:0000255" key="2">
    <source>
        <dbReference type="PROSITE-ProRule" id="PRU00316"/>
    </source>
</evidence>
<evidence type="ECO:0000256" key="3">
    <source>
        <dbReference type="SAM" id="MobiDB-lite"/>
    </source>
</evidence>
<evidence type="ECO:0000269" key="4">
    <source>
    </source>
</evidence>
<evidence type="ECO:0000269" key="5">
    <source>
    </source>
</evidence>
<evidence type="ECO:0000269" key="6">
    <source>
    </source>
</evidence>
<evidence type="ECO:0000269" key="7">
    <source>
    </source>
</evidence>
<evidence type="ECO:0000269" key="8">
    <source>
    </source>
</evidence>
<evidence type="ECO:0000269" key="9">
    <source>
    </source>
</evidence>
<evidence type="ECO:0000269" key="10">
    <source ref="4"/>
</evidence>
<evidence type="ECO:0000305" key="11"/>
<evidence type="ECO:0007829" key="12">
    <source>
        <dbReference type="PDB" id="3LQM"/>
    </source>
</evidence>
<evidence type="ECO:0007829" key="13">
    <source>
        <dbReference type="PDB" id="5T5W"/>
    </source>
</evidence>
<evidence type="ECO:0007829" key="14">
    <source>
        <dbReference type="PDB" id="6X93"/>
    </source>
</evidence>
<dbReference type="EMBL" id="Z17227">
    <property type="protein sequence ID" value="CAA78933.1"/>
    <property type="molecule type" value="mRNA"/>
</dbReference>
<dbReference type="EMBL" id="U08988">
    <property type="protein sequence ID" value="AAA86872.1"/>
    <property type="molecule type" value="Genomic_DNA"/>
</dbReference>
<dbReference type="EMBL" id="BT009777">
    <property type="protein sequence ID" value="AAP88779.1"/>
    <property type="molecule type" value="mRNA"/>
</dbReference>
<dbReference type="EMBL" id="AY323826">
    <property type="protein sequence ID" value="AAP72016.1"/>
    <property type="molecule type" value="Genomic_DNA"/>
</dbReference>
<dbReference type="EMBL" id="BC001903">
    <property type="protein sequence ID" value="AAH01903.1"/>
    <property type="molecule type" value="mRNA"/>
</dbReference>
<dbReference type="CCDS" id="CCDS13623.1"/>
<dbReference type="PIR" id="A47003">
    <property type="entry name" value="A47003"/>
</dbReference>
<dbReference type="RefSeq" id="NP_000619.3">
    <property type="nucleotide sequence ID" value="NM_000628.4"/>
</dbReference>
<dbReference type="PDB" id="3LQM">
    <property type="method" value="X-ray"/>
    <property type="resolution" value="2.14 A"/>
    <property type="chains" value="A/B=20-220"/>
</dbReference>
<dbReference type="PDB" id="5T5W">
    <property type="method" value="X-ray"/>
    <property type="resolution" value="2.85 A"/>
    <property type="chains" value="A=19-220"/>
</dbReference>
<dbReference type="PDB" id="6X93">
    <property type="method" value="EM"/>
    <property type="resolution" value="3.50 A"/>
    <property type="chains" value="C/F=20-220"/>
</dbReference>
<dbReference type="PDB" id="9BPU">
    <property type="method" value="EM"/>
    <property type="resolution" value="3.26 A"/>
    <property type="chains" value="A=20-220"/>
</dbReference>
<dbReference type="PDB" id="9BPV">
    <property type="method" value="EM"/>
    <property type="resolution" value="3.00 A"/>
    <property type="chains" value="A=20-220"/>
</dbReference>
<dbReference type="PDBsum" id="3LQM"/>
<dbReference type="PDBsum" id="5T5W"/>
<dbReference type="PDBsum" id="6X93"/>
<dbReference type="PDBsum" id="9BPU"/>
<dbReference type="PDBsum" id="9BPV"/>
<dbReference type="EMDB" id="EMD-22098"/>
<dbReference type="EMDB" id="EMD-44790"/>
<dbReference type="EMDB" id="EMD-44791"/>
<dbReference type="SMR" id="Q08334"/>
<dbReference type="BioGRID" id="109802">
    <property type="interactions" value="11"/>
</dbReference>
<dbReference type="ComplexPortal" id="CPX-10306">
    <property type="entry name" value="Interleukin-22 receptor-ligand complex"/>
</dbReference>
<dbReference type="ComplexPortal" id="CPX-10316">
    <property type="entry name" value="Interleukin-26 receptor-ligand complex"/>
</dbReference>
<dbReference type="ComplexPortal" id="CPX-6011">
    <property type="entry name" value="Interferon lambda receptor-ligand complex, IFNL1 variant"/>
</dbReference>
<dbReference type="ComplexPortal" id="CPX-6012">
    <property type="entry name" value="Interferon lambda receptor-ligand complex, IFNL2 variant"/>
</dbReference>
<dbReference type="ComplexPortal" id="CPX-6013">
    <property type="entry name" value="Interferon lambda receptor-ligand complex, IFNL3 variant"/>
</dbReference>
<dbReference type="ComplexPortal" id="CPX-6014">
    <property type="entry name" value="Interferon lambda receptor-ligand complex, IFNL4 variant"/>
</dbReference>
<dbReference type="ComplexPortal" id="CPX-742">
    <property type="entry name" value="Interleukin-10 receptor-ligand complex"/>
</dbReference>
<dbReference type="CORUM" id="Q08334"/>
<dbReference type="DIP" id="DIP-6016N"/>
<dbReference type="FunCoup" id="Q08334">
    <property type="interactions" value="751"/>
</dbReference>
<dbReference type="IntAct" id="Q08334">
    <property type="interactions" value="9"/>
</dbReference>
<dbReference type="STRING" id="9606.ENSP00000290200"/>
<dbReference type="ChEMBL" id="CHEMBL3831284"/>
<dbReference type="ChEMBL" id="CHEMBL4804251"/>
<dbReference type="ChEMBL" id="CHEMBL4804254"/>
<dbReference type="GuidetoPHARMACOLOGY" id="1728"/>
<dbReference type="TCDB" id="8.A.132.1.13">
    <property type="family name" value="the interferon/interleukin receptor (iir) family"/>
</dbReference>
<dbReference type="GlyCosmos" id="Q08334">
    <property type="glycosylation" value="4 sites, No reported glycans"/>
</dbReference>
<dbReference type="GlyGen" id="Q08334">
    <property type="glycosylation" value="5 sites, 1 N-linked glycan (1 site)"/>
</dbReference>
<dbReference type="iPTMnet" id="Q08334"/>
<dbReference type="PhosphoSitePlus" id="Q08334"/>
<dbReference type="SwissPalm" id="Q08334"/>
<dbReference type="BioMuta" id="IL10RB"/>
<dbReference type="DMDM" id="56757647"/>
<dbReference type="jPOST" id="Q08334"/>
<dbReference type="MassIVE" id="Q08334"/>
<dbReference type="PaxDb" id="9606-ENSP00000290200"/>
<dbReference type="PeptideAtlas" id="Q08334"/>
<dbReference type="ProteomicsDB" id="58594"/>
<dbReference type="Pumba" id="Q08334"/>
<dbReference type="Antibodypedia" id="34939">
    <property type="antibodies" value="370 antibodies from 31 providers"/>
</dbReference>
<dbReference type="DNASU" id="3588"/>
<dbReference type="Ensembl" id="ENST00000290200.7">
    <property type="protein sequence ID" value="ENSP00000290200.2"/>
    <property type="gene ID" value="ENSG00000243646.11"/>
</dbReference>
<dbReference type="GeneID" id="3588"/>
<dbReference type="KEGG" id="hsa:3588"/>
<dbReference type="MANE-Select" id="ENST00000290200.7">
    <property type="protein sequence ID" value="ENSP00000290200.2"/>
    <property type="RefSeq nucleotide sequence ID" value="NM_000628.5"/>
    <property type="RefSeq protein sequence ID" value="NP_000619.3"/>
</dbReference>
<dbReference type="UCSC" id="uc002yrk.3">
    <property type="organism name" value="human"/>
</dbReference>
<dbReference type="AGR" id="HGNC:5965"/>
<dbReference type="CTD" id="3588"/>
<dbReference type="DisGeNET" id="3588"/>
<dbReference type="GeneCards" id="IL10RB"/>
<dbReference type="HGNC" id="HGNC:5965">
    <property type="gene designation" value="IL10RB"/>
</dbReference>
<dbReference type="HPA" id="ENSG00000243646">
    <property type="expression patterns" value="Low tissue specificity"/>
</dbReference>
<dbReference type="MalaCards" id="IL10RB"/>
<dbReference type="MIM" id="123889">
    <property type="type" value="gene"/>
</dbReference>
<dbReference type="MIM" id="610424">
    <property type="type" value="phenotype"/>
</dbReference>
<dbReference type="MIM" id="612567">
    <property type="type" value="phenotype"/>
</dbReference>
<dbReference type="neXtProt" id="NX_Q08334"/>
<dbReference type="OpenTargets" id="ENSG00000243646"/>
<dbReference type="Orphanet" id="238569">
    <property type="disease" value="Immune dysregulation-inflammatory bowel disease-arthritis-recurrent infections syndrome"/>
</dbReference>
<dbReference type="PharmGKB" id="PA29780"/>
<dbReference type="VEuPathDB" id="HostDB:ENSG00000243646"/>
<dbReference type="eggNOG" id="ENOG502S2QA">
    <property type="taxonomic scope" value="Eukaryota"/>
</dbReference>
<dbReference type="GeneTree" id="ENSGT00940000158231"/>
<dbReference type="HOGENOM" id="CLU_057526_1_0_1"/>
<dbReference type="InParanoid" id="Q08334"/>
<dbReference type="OMA" id="QWDSPAF"/>
<dbReference type="OrthoDB" id="8724082at2759"/>
<dbReference type="PAN-GO" id="Q08334">
    <property type="GO annotations" value="3 GO annotations based on evolutionary models"/>
</dbReference>
<dbReference type="PhylomeDB" id="Q08334"/>
<dbReference type="TreeFam" id="TF332537"/>
<dbReference type="PathwayCommons" id="Q08334"/>
<dbReference type="Reactome" id="R-HSA-449836">
    <property type="pathway name" value="Other interleukin signaling"/>
</dbReference>
<dbReference type="Reactome" id="R-HSA-6783783">
    <property type="pathway name" value="Interleukin-10 signaling"/>
</dbReference>
<dbReference type="Reactome" id="R-HSA-8854691">
    <property type="pathway name" value="Interleukin-20 family signaling"/>
</dbReference>
<dbReference type="SignaLink" id="Q08334"/>
<dbReference type="SIGNOR" id="Q08334"/>
<dbReference type="BioGRID-ORCS" id="3588">
    <property type="hits" value="11 hits in 1160 CRISPR screens"/>
</dbReference>
<dbReference type="ChiTaRS" id="IL10RB">
    <property type="organism name" value="human"/>
</dbReference>
<dbReference type="EvolutionaryTrace" id="Q08334"/>
<dbReference type="GeneWiki" id="Interleukin_10_receptor,_beta_subunit"/>
<dbReference type="GenomeRNAi" id="3588"/>
<dbReference type="Pharos" id="Q08334">
    <property type="development level" value="Tbio"/>
</dbReference>
<dbReference type="PRO" id="PR:Q08334"/>
<dbReference type="Proteomes" id="UP000005640">
    <property type="component" value="Chromosome 21"/>
</dbReference>
<dbReference type="RNAct" id="Q08334">
    <property type="molecule type" value="protein"/>
</dbReference>
<dbReference type="Bgee" id="ENSG00000243646">
    <property type="expression patterns" value="Expressed in placenta and 99 other cell types or tissues"/>
</dbReference>
<dbReference type="ExpressionAtlas" id="Q08334">
    <property type="expression patterns" value="baseline and differential"/>
</dbReference>
<dbReference type="GO" id="GO:0032002">
    <property type="term" value="C:interleukin-28 receptor complex"/>
    <property type="evidence" value="ECO:0000303"/>
    <property type="project" value="UniProtKB"/>
</dbReference>
<dbReference type="GO" id="GO:0016020">
    <property type="term" value="C:membrane"/>
    <property type="evidence" value="ECO:0000304"/>
    <property type="project" value="ProtInc"/>
</dbReference>
<dbReference type="GO" id="GO:0005886">
    <property type="term" value="C:plasma membrane"/>
    <property type="evidence" value="ECO:0000318"/>
    <property type="project" value="GO_Central"/>
</dbReference>
<dbReference type="GO" id="GO:0015026">
    <property type="term" value="F:coreceptor activity"/>
    <property type="evidence" value="ECO:0000314"/>
    <property type="project" value="UniProt"/>
</dbReference>
<dbReference type="GO" id="GO:0004920">
    <property type="term" value="F:interleukin-10 receptor activity"/>
    <property type="evidence" value="ECO:0000318"/>
    <property type="project" value="GO_Central"/>
</dbReference>
<dbReference type="GO" id="GO:0038023">
    <property type="term" value="F:signaling receptor activity"/>
    <property type="evidence" value="ECO:0000304"/>
    <property type="project" value="ProtInc"/>
</dbReference>
<dbReference type="GO" id="GO:0098586">
    <property type="term" value="P:cellular response to virus"/>
    <property type="evidence" value="ECO:0000303"/>
    <property type="project" value="ComplexPortal"/>
</dbReference>
<dbReference type="GO" id="GO:0019221">
    <property type="term" value="P:cytokine-mediated signaling pathway"/>
    <property type="evidence" value="ECO:0000318"/>
    <property type="project" value="GO_Central"/>
</dbReference>
<dbReference type="GO" id="GO:0051607">
    <property type="term" value="P:defense response to virus"/>
    <property type="evidence" value="ECO:0007669"/>
    <property type="project" value="UniProtKB-KW"/>
</dbReference>
<dbReference type="GO" id="GO:0006955">
    <property type="term" value="P:immune response"/>
    <property type="evidence" value="ECO:0000304"/>
    <property type="project" value="ProtInc"/>
</dbReference>
<dbReference type="GO" id="GO:0006954">
    <property type="term" value="P:inflammatory response"/>
    <property type="evidence" value="ECO:0000304"/>
    <property type="project" value="ProtInc"/>
</dbReference>
<dbReference type="GO" id="GO:0140105">
    <property type="term" value="P:interleukin-10-mediated signaling pathway"/>
    <property type="evidence" value="ECO:0000314"/>
    <property type="project" value="UniProt"/>
</dbReference>
<dbReference type="GO" id="GO:1901857">
    <property type="term" value="P:positive regulation of cellular respiration"/>
    <property type="evidence" value="ECO:0000315"/>
    <property type="project" value="ARUK-UCL"/>
</dbReference>
<dbReference type="GO" id="GO:0046427">
    <property type="term" value="P:positive regulation of receptor signaling pathway via JAK-STAT"/>
    <property type="evidence" value="ECO:0000314"/>
    <property type="project" value="UniProtKB"/>
</dbReference>
<dbReference type="GO" id="GO:0007165">
    <property type="term" value="P:signal transduction"/>
    <property type="evidence" value="ECO:0000304"/>
    <property type="project" value="ProtInc"/>
</dbReference>
<dbReference type="GO" id="GO:0038196">
    <property type="term" value="P:type III interferon-mediated signaling pathway"/>
    <property type="evidence" value="ECO:0000303"/>
    <property type="project" value="ComplexPortal"/>
</dbReference>
<dbReference type="CDD" id="cd00063">
    <property type="entry name" value="FN3"/>
    <property type="match status" value="1"/>
</dbReference>
<dbReference type="FunFam" id="2.60.40.10:FF:001312">
    <property type="entry name" value="Interleukin 10 receptor subunit beta"/>
    <property type="match status" value="1"/>
</dbReference>
<dbReference type="FunFam" id="2.60.40.10:FF:001363">
    <property type="entry name" value="Interleukin 10 receptor subunit beta"/>
    <property type="match status" value="1"/>
</dbReference>
<dbReference type="Gene3D" id="2.60.40.10">
    <property type="entry name" value="Immunoglobulins"/>
    <property type="match status" value="2"/>
</dbReference>
<dbReference type="InterPro" id="IPR003961">
    <property type="entry name" value="FN3_dom"/>
</dbReference>
<dbReference type="InterPro" id="IPR036116">
    <property type="entry name" value="FN3_sf"/>
</dbReference>
<dbReference type="InterPro" id="IPR013783">
    <property type="entry name" value="Ig-like_fold"/>
</dbReference>
<dbReference type="InterPro" id="IPR015373">
    <property type="entry name" value="Interferon/interleukin_rcp_dom"/>
</dbReference>
<dbReference type="InterPro" id="IPR050650">
    <property type="entry name" value="Type-II_Cytokine-TF_Rcpt"/>
</dbReference>
<dbReference type="PANTHER" id="PTHR20859">
    <property type="entry name" value="INTERFERON/INTERLEUKIN RECEPTOR"/>
    <property type="match status" value="1"/>
</dbReference>
<dbReference type="PANTHER" id="PTHR20859:SF50">
    <property type="entry name" value="INTERLEUKIN-10 RECEPTOR SUBUNIT BETA"/>
    <property type="match status" value="1"/>
</dbReference>
<dbReference type="Pfam" id="PF09294">
    <property type="entry name" value="Interfer-bind"/>
    <property type="match status" value="1"/>
</dbReference>
<dbReference type="Pfam" id="PF01108">
    <property type="entry name" value="Tissue_fac"/>
    <property type="match status" value="1"/>
</dbReference>
<dbReference type="SUPFAM" id="SSF49265">
    <property type="entry name" value="Fibronectin type III"/>
    <property type="match status" value="2"/>
</dbReference>
<dbReference type="PROSITE" id="PS50853">
    <property type="entry name" value="FN3"/>
    <property type="match status" value="2"/>
</dbReference>